<gene>
    <name type="primary">coaA</name>
    <name type="ordered locus">lp_0913</name>
</gene>
<organism>
    <name type="scientific">Lactiplantibacillus plantarum (strain ATCC BAA-793 / NCIMB 8826 / WCFS1)</name>
    <name type="common">Lactobacillus plantarum</name>
    <dbReference type="NCBI Taxonomy" id="220668"/>
    <lineage>
        <taxon>Bacteria</taxon>
        <taxon>Bacillati</taxon>
        <taxon>Bacillota</taxon>
        <taxon>Bacilli</taxon>
        <taxon>Lactobacillales</taxon>
        <taxon>Lactobacillaceae</taxon>
        <taxon>Lactiplantibacillus</taxon>
    </lineage>
</organism>
<keyword id="KW-0067">ATP-binding</keyword>
<keyword id="KW-0173">Coenzyme A biosynthesis</keyword>
<keyword id="KW-0963">Cytoplasm</keyword>
<keyword id="KW-0418">Kinase</keyword>
<keyword id="KW-0547">Nucleotide-binding</keyword>
<keyword id="KW-1185">Reference proteome</keyword>
<keyword id="KW-0808">Transferase</keyword>
<name>COAA_LACPL</name>
<comment type="catalytic activity">
    <reaction>
        <text>(R)-pantothenate + ATP = (R)-4'-phosphopantothenate + ADP + H(+)</text>
        <dbReference type="Rhea" id="RHEA:16373"/>
        <dbReference type="ChEBI" id="CHEBI:10986"/>
        <dbReference type="ChEBI" id="CHEBI:15378"/>
        <dbReference type="ChEBI" id="CHEBI:29032"/>
        <dbReference type="ChEBI" id="CHEBI:30616"/>
        <dbReference type="ChEBI" id="CHEBI:456216"/>
        <dbReference type="EC" id="2.7.1.33"/>
    </reaction>
</comment>
<comment type="pathway">
    <text>Cofactor biosynthesis; coenzyme A biosynthesis; CoA from (R)-pantothenate: step 1/5.</text>
</comment>
<comment type="subcellular location">
    <subcellularLocation>
        <location evidence="1">Cytoplasm</location>
    </subcellularLocation>
</comment>
<comment type="similarity">
    <text evidence="3">Belongs to the prokaryotic pantothenate kinase family.</text>
</comment>
<evidence type="ECO:0000250" key="1"/>
<evidence type="ECO:0000255" key="2"/>
<evidence type="ECO:0000305" key="3"/>
<reference key="1">
    <citation type="journal article" date="2003" name="Proc. Natl. Acad. Sci. U.S.A.">
        <title>Complete genome sequence of Lactobacillus plantarum WCFS1.</title>
        <authorList>
            <person name="Kleerebezem M."/>
            <person name="Boekhorst J."/>
            <person name="van Kranenburg R."/>
            <person name="Molenaar D."/>
            <person name="Kuipers O.P."/>
            <person name="Leer R."/>
            <person name="Tarchini R."/>
            <person name="Peters S.A."/>
            <person name="Sandbrink H.M."/>
            <person name="Fiers M.W.E.J."/>
            <person name="Stiekema W."/>
            <person name="Klein Lankhorst R.M."/>
            <person name="Bron P.A."/>
            <person name="Hoffer S.M."/>
            <person name="Nierop Groot M.N."/>
            <person name="Kerkhoven R."/>
            <person name="De Vries M."/>
            <person name="Ursing B."/>
            <person name="De Vos W.M."/>
            <person name="Siezen R.J."/>
        </authorList>
    </citation>
    <scope>NUCLEOTIDE SEQUENCE [LARGE SCALE GENOMIC DNA]</scope>
    <source>
        <strain>ATCC BAA-793 / NCIMB 8826 / WCFS1</strain>
    </source>
</reference>
<reference key="2">
    <citation type="journal article" date="2012" name="J. Bacteriol.">
        <title>Complete resequencing and reannotation of the Lactobacillus plantarum WCFS1 genome.</title>
        <authorList>
            <person name="Siezen R.J."/>
            <person name="Francke C."/>
            <person name="Renckens B."/>
            <person name="Boekhorst J."/>
            <person name="Wels M."/>
            <person name="Kleerebezem M."/>
            <person name="van Hijum S.A."/>
        </authorList>
    </citation>
    <scope>NUCLEOTIDE SEQUENCE [LARGE SCALE GENOMIC DNA]</scope>
    <scope>GENOME REANNOTATION</scope>
    <source>
        <strain>ATCC BAA-793 / NCIMB 8826 / WCFS1</strain>
    </source>
</reference>
<proteinExistence type="inferred from homology"/>
<dbReference type="EC" id="2.7.1.33"/>
<dbReference type="EMBL" id="AL935263">
    <property type="protein sequence ID" value="CCC78353.1"/>
    <property type="molecule type" value="Genomic_DNA"/>
</dbReference>
<dbReference type="RefSeq" id="WP_003641152.1">
    <property type="nucleotide sequence ID" value="NC_004567.2"/>
</dbReference>
<dbReference type="RefSeq" id="YP_004888867.1">
    <property type="nucleotide sequence ID" value="NC_004567.2"/>
</dbReference>
<dbReference type="SMR" id="Q88Y75"/>
<dbReference type="STRING" id="220668.lp_0913"/>
<dbReference type="EnsemblBacteria" id="CCC78353">
    <property type="protein sequence ID" value="CCC78353"/>
    <property type="gene ID" value="lp_0913"/>
</dbReference>
<dbReference type="GeneID" id="77217414"/>
<dbReference type="KEGG" id="lpl:lp_0913"/>
<dbReference type="PATRIC" id="fig|220668.9.peg.773"/>
<dbReference type="eggNOG" id="COG1072">
    <property type="taxonomic scope" value="Bacteria"/>
</dbReference>
<dbReference type="HOGENOM" id="CLU_053818_1_1_9"/>
<dbReference type="OrthoDB" id="1550976at2"/>
<dbReference type="PhylomeDB" id="Q88Y75"/>
<dbReference type="UniPathway" id="UPA00241">
    <property type="reaction ID" value="UER00352"/>
</dbReference>
<dbReference type="Proteomes" id="UP000000432">
    <property type="component" value="Chromosome"/>
</dbReference>
<dbReference type="GO" id="GO:0005737">
    <property type="term" value="C:cytoplasm"/>
    <property type="evidence" value="ECO:0007669"/>
    <property type="project" value="UniProtKB-SubCell"/>
</dbReference>
<dbReference type="GO" id="GO:0005524">
    <property type="term" value="F:ATP binding"/>
    <property type="evidence" value="ECO:0007669"/>
    <property type="project" value="UniProtKB-UniRule"/>
</dbReference>
<dbReference type="GO" id="GO:0004594">
    <property type="term" value="F:pantothenate kinase activity"/>
    <property type="evidence" value="ECO:0007669"/>
    <property type="project" value="UniProtKB-UniRule"/>
</dbReference>
<dbReference type="GO" id="GO:0015937">
    <property type="term" value="P:coenzyme A biosynthetic process"/>
    <property type="evidence" value="ECO:0007669"/>
    <property type="project" value="UniProtKB-UniRule"/>
</dbReference>
<dbReference type="CDD" id="cd02025">
    <property type="entry name" value="PanK"/>
    <property type="match status" value="1"/>
</dbReference>
<dbReference type="Gene3D" id="3.40.50.300">
    <property type="entry name" value="P-loop containing nucleotide triphosphate hydrolases"/>
    <property type="match status" value="1"/>
</dbReference>
<dbReference type="HAMAP" id="MF_00215">
    <property type="entry name" value="Pantothen_kinase_1"/>
    <property type="match status" value="1"/>
</dbReference>
<dbReference type="InterPro" id="IPR027417">
    <property type="entry name" value="P-loop_NTPase"/>
</dbReference>
<dbReference type="InterPro" id="IPR004566">
    <property type="entry name" value="PanK"/>
</dbReference>
<dbReference type="InterPro" id="IPR006083">
    <property type="entry name" value="PRK/URK"/>
</dbReference>
<dbReference type="NCBIfam" id="TIGR00554">
    <property type="entry name" value="panK_bact"/>
    <property type="match status" value="1"/>
</dbReference>
<dbReference type="PANTHER" id="PTHR10285">
    <property type="entry name" value="URIDINE KINASE"/>
    <property type="match status" value="1"/>
</dbReference>
<dbReference type="Pfam" id="PF00485">
    <property type="entry name" value="PRK"/>
    <property type="match status" value="1"/>
</dbReference>
<dbReference type="PIRSF" id="PIRSF000545">
    <property type="entry name" value="Pantothenate_kin"/>
    <property type="match status" value="1"/>
</dbReference>
<dbReference type="SUPFAM" id="SSF52540">
    <property type="entry name" value="P-loop containing nucleoside triphosphate hydrolases"/>
    <property type="match status" value="1"/>
</dbReference>
<protein>
    <recommendedName>
        <fullName>Pantothenate kinase</fullName>
        <ecNumber>2.7.1.33</ecNumber>
    </recommendedName>
    <alternativeName>
        <fullName>Pantothenic acid kinase</fullName>
    </alternativeName>
</protein>
<sequence>MEDQMNYYRFSREQWKQFYRNNQHQVPLTAANLHEIEAFNDRISLDDVRDIYMPFAHLLQAKYEHYLSWRETESVFLHRQNRQSPFIIGVSGSVAVGKTTTARLLEILFKYLYPDRRTQLITTDGFLYPNAELKKMQLMERKGFPESYDMTRLIQFLNDVKSGKPLAKAPVYSHQTYDIVPNRFDVITHPDILIIEGINVLQLPSNQAIYISDFTDFSVYVDADADLIEDWYLERFKALMKTAFQDPTNYFYPWAIGDPKDAMAMAERVWEEVNLKNLNDYILPTRNRADLILHKVAHHVIDAVYFRKY</sequence>
<feature type="chain" id="PRO_0000194433" description="Pantothenate kinase">
    <location>
        <begin position="1"/>
        <end position="309"/>
    </location>
</feature>
<feature type="binding site" evidence="2">
    <location>
        <begin position="92"/>
        <end position="99"/>
    </location>
    <ligand>
        <name>ATP</name>
        <dbReference type="ChEBI" id="CHEBI:30616"/>
    </ligand>
</feature>
<accession>Q88Y75</accession>
<accession>F9UMB4</accession>